<name>DEF1_MESAU</name>
<reference key="1">
    <citation type="journal article" date="1996" name="Infect. Immun.">
        <title>Isolation, antimicrobial activities, and primary structures of hamster neutrophil defensins.</title>
        <authorList>
            <person name="Mak P."/>
            <person name="Wojcik K."/>
            <person name="Thogersen I.B."/>
            <person name="Dubin A."/>
        </authorList>
    </citation>
    <scope>PROTEIN SEQUENCE</scope>
</reference>
<evidence type="ECO:0000250" key="1"/>
<evidence type="ECO:0000305" key="2"/>
<comment type="function">
    <text>Anti-fungal and bactericidal activity, greater against Gram-positive bacteria.</text>
</comment>
<comment type="subcellular location">
    <subcellularLocation>
        <location>Secreted</location>
    </subcellularLocation>
</comment>
<comment type="similarity">
    <text evidence="2">Belongs to the alpha-defensin family.</text>
</comment>
<protein>
    <recommendedName>
        <fullName>Neutrophil defensin 1</fullName>
    </recommendedName>
    <alternativeName>
        <fullName>HANP-1</fullName>
    </alternativeName>
</protein>
<keyword id="KW-0044">Antibiotic</keyword>
<keyword id="KW-0929">Antimicrobial</keyword>
<keyword id="KW-0211">Defensin</keyword>
<keyword id="KW-0903">Direct protein sequencing</keyword>
<keyword id="KW-1015">Disulfide bond</keyword>
<keyword id="KW-0295">Fungicide</keyword>
<keyword id="KW-1185">Reference proteome</keyword>
<keyword id="KW-0964">Secreted</keyword>
<feature type="peptide" id="PRO_0000044714" description="Neutrophil defensin 1">
    <location>
        <begin position="1"/>
        <end position="33"/>
    </location>
</feature>
<feature type="disulfide bond" evidence="1">
    <location>
        <begin position="3"/>
        <end position="31"/>
    </location>
</feature>
<feature type="disulfide bond" evidence="1">
    <location>
        <begin position="5"/>
        <end position="20"/>
    </location>
</feature>
<feature type="disulfide bond" evidence="1">
    <location>
        <begin position="10"/>
        <end position="30"/>
    </location>
</feature>
<accession>P81465</accession>
<dbReference type="SMR" id="P81465"/>
<dbReference type="Proteomes" id="UP000189706">
    <property type="component" value="Unplaced"/>
</dbReference>
<dbReference type="GO" id="GO:0005576">
    <property type="term" value="C:extracellular region"/>
    <property type="evidence" value="ECO:0007669"/>
    <property type="project" value="UniProtKB-SubCell"/>
</dbReference>
<dbReference type="GO" id="GO:0042742">
    <property type="term" value="P:defense response to bacterium"/>
    <property type="evidence" value="ECO:0007669"/>
    <property type="project" value="UniProtKB-KW"/>
</dbReference>
<dbReference type="GO" id="GO:0050832">
    <property type="term" value="P:defense response to fungus"/>
    <property type="evidence" value="ECO:0007669"/>
    <property type="project" value="UniProtKB-KW"/>
</dbReference>
<dbReference type="GO" id="GO:0031640">
    <property type="term" value="P:killing of cells of another organism"/>
    <property type="evidence" value="ECO:0007669"/>
    <property type="project" value="UniProtKB-KW"/>
</dbReference>
<dbReference type="InterPro" id="IPR006081">
    <property type="entry name" value="Alpha-defensin_C"/>
</dbReference>
<dbReference type="InterPro" id="IPR006080">
    <property type="entry name" value="Beta/alpha-defensin_C"/>
</dbReference>
<dbReference type="Pfam" id="PF00323">
    <property type="entry name" value="Defensin_1"/>
    <property type="match status" value="1"/>
</dbReference>
<dbReference type="SMART" id="SM00048">
    <property type="entry name" value="DEFSN"/>
    <property type="match status" value="1"/>
</dbReference>
<dbReference type="SUPFAM" id="SSF57392">
    <property type="entry name" value="Defensin-like"/>
    <property type="match status" value="1"/>
</dbReference>
<dbReference type="PROSITE" id="PS00269">
    <property type="entry name" value="DEFENSIN"/>
    <property type="match status" value="1"/>
</dbReference>
<organism>
    <name type="scientific">Mesocricetus auratus</name>
    <name type="common">Golden hamster</name>
    <dbReference type="NCBI Taxonomy" id="10036"/>
    <lineage>
        <taxon>Eukaryota</taxon>
        <taxon>Metazoa</taxon>
        <taxon>Chordata</taxon>
        <taxon>Craniata</taxon>
        <taxon>Vertebrata</taxon>
        <taxon>Euteleostomi</taxon>
        <taxon>Mammalia</taxon>
        <taxon>Eutheria</taxon>
        <taxon>Euarchontoglires</taxon>
        <taxon>Glires</taxon>
        <taxon>Rodentia</taxon>
        <taxon>Myomorpha</taxon>
        <taxon>Muroidea</taxon>
        <taxon>Cricetidae</taxon>
        <taxon>Cricetinae</taxon>
        <taxon>Mesocricetus</taxon>
    </lineage>
</organism>
<proteinExistence type="evidence at protein level"/>
<sequence length="33" mass="4014">VTCFCRRRGCASRERHIGYCRFGNTIYRLCCRR</sequence>